<proteinExistence type="inferred from homology"/>
<accession>A9WQB0</accession>
<name>RL35_RENSM</name>
<keyword id="KW-1185">Reference proteome</keyword>
<keyword id="KW-0687">Ribonucleoprotein</keyword>
<keyword id="KW-0689">Ribosomal protein</keyword>
<feature type="chain" id="PRO_1000081621" description="Large ribosomal subunit protein bL35">
    <location>
        <begin position="1"/>
        <end position="64"/>
    </location>
</feature>
<feature type="region of interest" description="Disordered" evidence="2">
    <location>
        <begin position="1"/>
        <end position="28"/>
    </location>
</feature>
<organism>
    <name type="scientific">Renibacterium salmoninarum (strain ATCC 33209 / DSM 20767 / JCM 11484 / NBRC 15589 / NCIMB 2235)</name>
    <dbReference type="NCBI Taxonomy" id="288705"/>
    <lineage>
        <taxon>Bacteria</taxon>
        <taxon>Bacillati</taxon>
        <taxon>Actinomycetota</taxon>
        <taxon>Actinomycetes</taxon>
        <taxon>Micrococcales</taxon>
        <taxon>Micrococcaceae</taxon>
        <taxon>Renibacterium</taxon>
    </lineage>
</organism>
<dbReference type="EMBL" id="CP000910">
    <property type="protein sequence ID" value="ABY22493.1"/>
    <property type="molecule type" value="Genomic_DNA"/>
</dbReference>
<dbReference type="RefSeq" id="WP_012244192.1">
    <property type="nucleotide sequence ID" value="NC_010168.1"/>
</dbReference>
<dbReference type="SMR" id="A9WQB0"/>
<dbReference type="STRING" id="288705.RSal33209_0746"/>
<dbReference type="KEGG" id="rsa:RSal33209_0746"/>
<dbReference type="eggNOG" id="COG0291">
    <property type="taxonomic scope" value="Bacteria"/>
</dbReference>
<dbReference type="HOGENOM" id="CLU_169643_4_2_11"/>
<dbReference type="Proteomes" id="UP000002007">
    <property type="component" value="Chromosome"/>
</dbReference>
<dbReference type="GO" id="GO:0022625">
    <property type="term" value="C:cytosolic large ribosomal subunit"/>
    <property type="evidence" value="ECO:0007669"/>
    <property type="project" value="TreeGrafter"/>
</dbReference>
<dbReference type="GO" id="GO:0003735">
    <property type="term" value="F:structural constituent of ribosome"/>
    <property type="evidence" value="ECO:0007669"/>
    <property type="project" value="InterPro"/>
</dbReference>
<dbReference type="GO" id="GO:0006412">
    <property type="term" value="P:translation"/>
    <property type="evidence" value="ECO:0007669"/>
    <property type="project" value="UniProtKB-UniRule"/>
</dbReference>
<dbReference type="FunFam" id="4.10.410.60:FF:000001">
    <property type="entry name" value="50S ribosomal protein L35"/>
    <property type="match status" value="1"/>
</dbReference>
<dbReference type="Gene3D" id="4.10.410.60">
    <property type="match status" value="1"/>
</dbReference>
<dbReference type="HAMAP" id="MF_00514">
    <property type="entry name" value="Ribosomal_bL35"/>
    <property type="match status" value="1"/>
</dbReference>
<dbReference type="InterPro" id="IPR001706">
    <property type="entry name" value="Ribosomal_bL35"/>
</dbReference>
<dbReference type="InterPro" id="IPR021137">
    <property type="entry name" value="Ribosomal_bL35-like"/>
</dbReference>
<dbReference type="InterPro" id="IPR018265">
    <property type="entry name" value="Ribosomal_bL35_CS"/>
</dbReference>
<dbReference type="InterPro" id="IPR037229">
    <property type="entry name" value="Ribosomal_bL35_sf"/>
</dbReference>
<dbReference type="NCBIfam" id="TIGR00001">
    <property type="entry name" value="rpmI_bact"/>
    <property type="match status" value="1"/>
</dbReference>
<dbReference type="PANTHER" id="PTHR33343">
    <property type="entry name" value="54S RIBOSOMAL PROTEIN BL35M"/>
    <property type="match status" value="1"/>
</dbReference>
<dbReference type="PANTHER" id="PTHR33343:SF1">
    <property type="entry name" value="LARGE RIBOSOMAL SUBUNIT PROTEIN BL35M"/>
    <property type="match status" value="1"/>
</dbReference>
<dbReference type="Pfam" id="PF01632">
    <property type="entry name" value="Ribosomal_L35p"/>
    <property type="match status" value="1"/>
</dbReference>
<dbReference type="PRINTS" id="PR00064">
    <property type="entry name" value="RIBOSOMALL35"/>
</dbReference>
<dbReference type="SUPFAM" id="SSF143034">
    <property type="entry name" value="L35p-like"/>
    <property type="match status" value="1"/>
</dbReference>
<dbReference type="PROSITE" id="PS00936">
    <property type="entry name" value="RIBOSOMAL_L35"/>
    <property type="match status" value="1"/>
</dbReference>
<evidence type="ECO:0000255" key="1">
    <source>
        <dbReference type="HAMAP-Rule" id="MF_00514"/>
    </source>
</evidence>
<evidence type="ECO:0000256" key="2">
    <source>
        <dbReference type="SAM" id="MobiDB-lite"/>
    </source>
</evidence>
<evidence type="ECO:0000305" key="3"/>
<reference key="1">
    <citation type="journal article" date="2008" name="J. Bacteriol.">
        <title>Genome sequence of the fish pathogen Renibacterium salmoninarum suggests reductive evolution away from an environmental Arthrobacter ancestor.</title>
        <authorList>
            <person name="Wiens G.D."/>
            <person name="Rockey D.D."/>
            <person name="Wu Z."/>
            <person name="Chang J."/>
            <person name="Levy R."/>
            <person name="Crane S."/>
            <person name="Chen D.S."/>
            <person name="Capri G.R."/>
            <person name="Burnett J.R."/>
            <person name="Sudheesh P.S."/>
            <person name="Schipma M.J."/>
            <person name="Burd H."/>
            <person name="Bhattacharyya A."/>
            <person name="Rhodes L.D."/>
            <person name="Kaul R."/>
            <person name="Strom M.S."/>
        </authorList>
    </citation>
    <scope>NUCLEOTIDE SEQUENCE [LARGE SCALE GENOMIC DNA]</scope>
    <source>
        <strain>ATCC 33209 / DSM 20767 / JCM 11484 / NBRC 15589 / NCIMB 2235</strain>
    </source>
</reference>
<sequence length="64" mass="7257">MPKMKTHSGAKKRFKLTGSGKLKRQQANRRHYLEHKPSTLTRRLAADKTVSPADAKNIKKMLGI</sequence>
<comment type="similarity">
    <text evidence="1">Belongs to the bacterial ribosomal protein bL35 family.</text>
</comment>
<protein>
    <recommendedName>
        <fullName evidence="1">Large ribosomal subunit protein bL35</fullName>
    </recommendedName>
    <alternativeName>
        <fullName evidence="3">50S ribosomal protein L35</fullName>
    </alternativeName>
</protein>
<gene>
    <name evidence="1" type="primary">rpmI</name>
    <name type="ordered locus">RSal33209_0746</name>
</gene>